<reference key="1">
    <citation type="submission" date="1993-08" db="EMBL/GenBank/DDBJ databases">
        <authorList>
            <person name="Guex N."/>
            <person name="Henry H."/>
            <person name="Widmer F."/>
        </authorList>
    </citation>
    <scope>NUCLEOTIDE SEQUENCE [MRNA]</scope>
    <source>
        <strain>cv. Maple Arrow</strain>
        <tissue>Cotyledon</tissue>
    </source>
</reference>
<accession>P45457</accession>
<keyword id="KW-0329">Glyoxylate bypass</keyword>
<keyword id="KW-0330">Glyoxysome</keyword>
<keyword id="KW-0456">Lyase</keyword>
<keyword id="KW-0460">Magnesium</keyword>
<keyword id="KW-0479">Metal-binding</keyword>
<keyword id="KW-0576">Peroxisome</keyword>
<keyword id="KW-1185">Reference proteome</keyword>
<keyword id="KW-0816">Tricarboxylic acid cycle</keyword>
<gene>
    <name type="primary">ICL2</name>
</gene>
<comment type="function">
    <text evidence="1">Involved in storage lipid mobilization during the growth of higher plant seedling.</text>
</comment>
<comment type="catalytic activity">
    <reaction evidence="1">
        <text>D-threo-isocitrate = glyoxylate + succinate</text>
        <dbReference type="Rhea" id="RHEA:13245"/>
        <dbReference type="ChEBI" id="CHEBI:15562"/>
        <dbReference type="ChEBI" id="CHEBI:30031"/>
        <dbReference type="ChEBI" id="CHEBI:36655"/>
        <dbReference type="EC" id="4.1.3.1"/>
    </reaction>
</comment>
<comment type="cofactor">
    <cofactor evidence="2">
        <name>Mg(2+)</name>
        <dbReference type="ChEBI" id="CHEBI:18420"/>
    </cofactor>
</comment>
<comment type="pathway">
    <text evidence="1">Carbohydrate metabolism; glyoxylate cycle; (S)-malate from isocitrate: step 1/2.</text>
</comment>
<comment type="subunit">
    <text evidence="1">Homotetramer.</text>
</comment>
<comment type="subcellular location">
    <subcellularLocation>
        <location evidence="1">Glyoxysome</location>
    </subcellularLocation>
</comment>
<comment type="similarity">
    <text evidence="4">Belongs to the isocitrate lyase/PEP mutase superfamily. Isocitrate lyase family.</text>
</comment>
<protein>
    <recommendedName>
        <fullName evidence="1">Isocitrate lyase 2</fullName>
        <shortName evidence="1">ICL 2</shortName>
        <ecNumber evidence="1">4.1.3.1</ecNumber>
    </recommendedName>
    <alternativeName>
        <fullName evidence="1">Isocitrase 2</fullName>
    </alternativeName>
    <alternativeName>
        <fullName evidence="1">Isocitratsysase 2</fullName>
    </alternativeName>
</protein>
<proteinExistence type="evidence at transcript level"/>
<dbReference type="EC" id="4.1.3.1" evidence="1"/>
<dbReference type="EMBL" id="L02330">
    <property type="protein sequence ID" value="AAA33977.1"/>
    <property type="molecule type" value="mRNA"/>
</dbReference>
<dbReference type="PIR" id="T07632">
    <property type="entry name" value="T07632"/>
</dbReference>
<dbReference type="SMR" id="P45457"/>
<dbReference type="FunCoup" id="P45457">
    <property type="interactions" value="471"/>
</dbReference>
<dbReference type="STRING" id="3847.P45457"/>
<dbReference type="PaxDb" id="3847-GLYMA12G10780.1"/>
<dbReference type="eggNOG" id="KOG1260">
    <property type="taxonomic scope" value="Eukaryota"/>
</dbReference>
<dbReference type="InParanoid" id="P45457"/>
<dbReference type="UniPathway" id="UPA00703">
    <property type="reaction ID" value="UER00719"/>
</dbReference>
<dbReference type="Proteomes" id="UP000008827">
    <property type="component" value="Unplaced"/>
</dbReference>
<dbReference type="GO" id="GO:0009514">
    <property type="term" value="C:glyoxysome"/>
    <property type="evidence" value="ECO:0000318"/>
    <property type="project" value="GO_Central"/>
</dbReference>
<dbReference type="GO" id="GO:0004451">
    <property type="term" value="F:isocitrate lyase activity"/>
    <property type="evidence" value="ECO:0000318"/>
    <property type="project" value="GO_Central"/>
</dbReference>
<dbReference type="GO" id="GO:0046872">
    <property type="term" value="F:metal ion binding"/>
    <property type="evidence" value="ECO:0007669"/>
    <property type="project" value="UniProtKB-KW"/>
</dbReference>
<dbReference type="GO" id="GO:0006097">
    <property type="term" value="P:glyoxylate cycle"/>
    <property type="evidence" value="ECO:0007669"/>
    <property type="project" value="UniProtKB-UniPathway"/>
</dbReference>
<dbReference type="GO" id="GO:0006099">
    <property type="term" value="P:tricarboxylic acid cycle"/>
    <property type="evidence" value="ECO:0007669"/>
    <property type="project" value="UniProtKB-KW"/>
</dbReference>
<dbReference type="CDD" id="cd00377">
    <property type="entry name" value="ICL_PEPM"/>
    <property type="match status" value="1"/>
</dbReference>
<dbReference type="FunFam" id="1.10.10.850:FF:000001">
    <property type="entry name" value="Isocitrate lyase"/>
    <property type="match status" value="1"/>
</dbReference>
<dbReference type="Gene3D" id="1.10.10.850">
    <property type="match status" value="1"/>
</dbReference>
<dbReference type="Gene3D" id="3.20.20.60">
    <property type="entry name" value="Phosphoenolpyruvate-binding domains"/>
    <property type="match status" value="1"/>
</dbReference>
<dbReference type="InterPro" id="IPR039556">
    <property type="entry name" value="ICL/PEPM"/>
</dbReference>
<dbReference type="InterPro" id="IPR006254">
    <property type="entry name" value="Isocitrate_lyase"/>
</dbReference>
<dbReference type="InterPro" id="IPR018523">
    <property type="entry name" value="Isocitrate_lyase_ph_CS"/>
</dbReference>
<dbReference type="InterPro" id="IPR015813">
    <property type="entry name" value="Pyrv/PenolPyrv_kinase-like_dom"/>
</dbReference>
<dbReference type="InterPro" id="IPR040442">
    <property type="entry name" value="Pyrv_kinase-like_dom_sf"/>
</dbReference>
<dbReference type="NCBIfam" id="TIGR01346">
    <property type="entry name" value="isocit_lyase"/>
    <property type="match status" value="1"/>
</dbReference>
<dbReference type="PANTHER" id="PTHR21631:SF3">
    <property type="entry name" value="BIFUNCTIONAL GLYOXYLATE CYCLE PROTEIN"/>
    <property type="match status" value="1"/>
</dbReference>
<dbReference type="PANTHER" id="PTHR21631">
    <property type="entry name" value="ISOCITRATE LYASE/MALATE SYNTHASE"/>
    <property type="match status" value="1"/>
</dbReference>
<dbReference type="Pfam" id="PF00463">
    <property type="entry name" value="ICL"/>
    <property type="match status" value="1"/>
</dbReference>
<dbReference type="PIRSF" id="PIRSF001362">
    <property type="entry name" value="Isocit_lyase"/>
    <property type="match status" value="1"/>
</dbReference>
<dbReference type="SUPFAM" id="SSF51621">
    <property type="entry name" value="Phosphoenolpyruvate/pyruvate domain"/>
    <property type="match status" value="1"/>
</dbReference>
<dbReference type="PROSITE" id="PS00161">
    <property type="entry name" value="ISOCITRATE_LYASE"/>
    <property type="match status" value="1"/>
</dbReference>
<sequence>EAEVAEVQAWWNSERFRLTKRPYTARDVVSLRGNLRQTYASNEMAKKLWCLLKNHQANGTASRTFGALDPVQVTQMAKHLDTIYVSGWQCSATHTTSNEPGPDLADYPYDTVPNKVEHLFFAQQYHDRKQREERMRMSREERARTPYVDYLRPIIADGDTGFGGTTATVKLCKLFVERGAAGIHIEDQSSVTKKCGHMAGKVLVAISEHINRLVAARLQFDVMGVETVLVARTDAEAANLIQSNIDTRDHQFILGVTNPNLKGKSLATLMQQGMAAGKSGAELQALEDEWLSKAQLKTLSEAVVEAIERQNIGEEEKRRKLNEWMHHSSYERCLSNEEGREIAEKLGVRNLFWDWDLPRTREGFYRFKGSVIASVVRGWAFSPHADVIWMETASPNVIECTQFSEGVRSKHPQMMLGYNLSPSFNWDASGMSDEQMRDFIPKIAKLGYVWQFITVGGLHSNALITSTFARDFANRGMLAYVERIQREERNNGVDTLAHQKWAGANYYDRYLKTVQGGVASTAAMGKGVTEEQFKESWTRPGAVEIDRGSIVVAKARM</sequence>
<name>ACEA2_SOYBN</name>
<organism>
    <name type="scientific">Glycine max</name>
    <name type="common">Soybean</name>
    <name type="synonym">Glycine hispida</name>
    <dbReference type="NCBI Taxonomy" id="3847"/>
    <lineage>
        <taxon>Eukaryota</taxon>
        <taxon>Viridiplantae</taxon>
        <taxon>Streptophyta</taxon>
        <taxon>Embryophyta</taxon>
        <taxon>Tracheophyta</taxon>
        <taxon>Spermatophyta</taxon>
        <taxon>Magnoliopsida</taxon>
        <taxon>eudicotyledons</taxon>
        <taxon>Gunneridae</taxon>
        <taxon>Pentapetalae</taxon>
        <taxon>rosids</taxon>
        <taxon>fabids</taxon>
        <taxon>Fabales</taxon>
        <taxon>Fabaceae</taxon>
        <taxon>Papilionoideae</taxon>
        <taxon>50 kb inversion clade</taxon>
        <taxon>NPAAA clade</taxon>
        <taxon>indigoferoid/millettioid clade</taxon>
        <taxon>Phaseoleae</taxon>
        <taxon>Glycine</taxon>
        <taxon>Glycine subgen. Soja</taxon>
    </lineage>
</organism>
<feature type="chain" id="PRO_0000068812" description="Isocitrate lyase 2">
    <location>
        <begin position="1" status="less than"/>
        <end position="557"/>
    </location>
</feature>
<feature type="short sequence motif" description="Microbody targeting signal" evidence="3">
    <location>
        <begin position="555"/>
        <end position="557"/>
    </location>
</feature>
<feature type="active site" description="Proton acceptor" evidence="2">
    <location>
        <position position="195"/>
    </location>
</feature>
<feature type="binding site" evidence="2">
    <location>
        <begin position="86"/>
        <end position="88"/>
    </location>
    <ligand>
        <name>substrate</name>
    </ligand>
</feature>
<feature type="binding site" evidence="2">
    <location>
        <position position="157"/>
    </location>
    <ligand>
        <name>Mg(2+)</name>
        <dbReference type="ChEBI" id="CHEBI:18420"/>
    </ligand>
</feature>
<feature type="binding site" evidence="2">
    <location>
        <begin position="196"/>
        <end position="197"/>
    </location>
    <ligand>
        <name>substrate</name>
    </ligand>
</feature>
<feature type="binding site" evidence="2">
    <location>
        <position position="232"/>
    </location>
    <ligand>
        <name>substrate</name>
    </ligand>
</feature>
<feature type="binding site" evidence="2">
    <location>
        <begin position="419"/>
        <end position="423"/>
    </location>
    <ligand>
        <name>substrate</name>
    </ligand>
</feature>
<feature type="binding site" evidence="2">
    <location>
        <position position="454"/>
    </location>
    <ligand>
        <name>substrate</name>
    </ligand>
</feature>
<feature type="non-terminal residue">
    <location>
        <position position="1"/>
    </location>
</feature>
<evidence type="ECO:0000250" key="1">
    <source>
        <dbReference type="UniProtKB" id="P28297"/>
    </source>
</evidence>
<evidence type="ECO:0000250" key="2">
    <source>
        <dbReference type="UniProtKB" id="P9WKK7"/>
    </source>
</evidence>
<evidence type="ECO:0000255" key="3"/>
<evidence type="ECO:0000305" key="4"/>